<keyword id="KW-0963">Cytoplasm</keyword>
<keyword id="KW-0378">Hydrolase</keyword>
<keyword id="KW-1185">Reference proteome</keyword>
<comment type="catalytic activity">
    <reaction evidence="1">
        <text>urea + 2 H2O + H(+) = hydrogencarbonate + 2 NH4(+)</text>
        <dbReference type="Rhea" id="RHEA:20557"/>
        <dbReference type="ChEBI" id="CHEBI:15377"/>
        <dbReference type="ChEBI" id="CHEBI:15378"/>
        <dbReference type="ChEBI" id="CHEBI:16199"/>
        <dbReference type="ChEBI" id="CHEBI:17544"/>
        <dbReference type="ChEBI" id="CHEBI:28938"/>
        <dbReference type="EC" id="3.5.1.5"/>
    </reaction>
</comment>
<comment type="pathway">
    <text evidence="1">Nitrogen metabolism; urea degradation; CO(2) and NH(3) from urea (urease route): step 1/1.</text>
</comment>
<comment type="subunit">
    <text evidence="1">Heterotrimer of UreA (gamma), UreB (beta) and UreC (alpha) subunits. Three heterotrimers associate to form the active enzyme.</text>
</comment>
<comment type="subcellular location">
    <subcellularLocation>
        <location evidence="1">Cytoplasm</location>
    </subcellularLocation>
</comment>
<comment type="similarity">
    <text evidence="1">Belongs to the urease gamma subunit family.</text>
</comment>
<reference key="1">
    <citation type="journal article" date="2010" name="PLoS ONE">
        <title>The complete genome sequence of Cupriavidus metallidurans strain CH34, a master survivalist in harsh and anthropogenic environments.</title>
        <authorList>
            <person name="Janssen P.J."/>
            <person name="Van Houdt R."/>
            <person name="Moors H."/>
            <person name="Monsieurs P."/>
            <person name="Morin N."/>
            <person name="Michaux A."/>
            <person name="Benotmane M.A."/>
            <person name="Leys N."/>
            <person name="Vallaeys T."/>
            <person name="Lapidus A."/>
            <person name="Monchy S."/>
            <person name="Medigue C."/>
            <person name="Taghavi S."/>
            <person name="McCorkle S."/>
            <person name="Dunn J."/>
            <person name="van der Lelie D."/>
            <person name="Mergeay M."/>
        </authorList>
    </citation>
    <scope>NUCLEOTIDE SEQUENCE [LARGE SCALE GENOMIC DNA]</scope>
    <source>
        <strain>ATCC 43123 / DSM 2839 / NBRC 102507 / CH34</strain>
    </source>
</reference>
<proteinExistence type="inferred from homology"/>
<evidence type="ECO:0000255" key="1">
    <source>
        <dbReference type="HAMAP-Rule" id="MF_00739"/>
    </source>
</evidence>
<organism>
    <name type="scientific">Cupriavidus metallidurans (strain ATCC 43123 / DSM 2839 / NBRC 102507 / CH34)</name>
    <name type="common">Ralstonia metallidurans</name>
    <dbReference type="NCBI Taxonomy" id="266264"/>
    <lineage>
        <taxon>Bacteria</taxon>
        <taxon>Pseudomonadati</taxon>
        <taxon>Pseudomonadota</taxon>
        <taxon>Betaproteobacteria</taxon>
        <taxon>Burkholderiales</taxon>
        <taxon>Burkholderiaceae</taxon>
        <taxon>Cupriavidus</taxon>
    </lineage>
</organism>
<feature type="chain" id="PRO_1000046359" description="Urease subunit gamma">
    <location>
        <begin position="1"/>
        <end position="100"/>
    </location>
</feature>
<name>URE3_CUPMC</name>
<sequence length="100" mass="11021">MELTPREKDKLLIFTAALLAERRRARGLKLNYPEAVALITAAIMEGARDGRTVAELMHEGTTVLAREDVMDGVAEMIPEIQVEATFPDGTKLVTVHHPIV</sequence>
<accession>Q1LPT2</accession>
<dbReference type="EC" id="3.5.1.5" evidence="1"/>
<dbReference type="EMBL" id="CP000352">
    <property type="protein sequence ID" value="ABF07844.1"/>
    <property type="molecule type" value="Genomic_DNA"/>
</dbReference>
<dbReference type="RefSeq" id="WP_011515766.1">
    <property type="nucleotide sequence ID" value="NC_007973.1"/>
</dbReference>
<dbReference type="SMR" id="Q1LPT2"/>
<dbReference type="STRING" id="266264.Rmet_0958"/>
<dbReference type="KEGG" id="rme:Rmet_0958"/>
<dbReference type="eggNOG" id="COG0831">
    <property type="taxonomic scope" value="Bacteria"/>
</dbReference>
<dbReference type="HOGENOM" id="CLU_145825_1_0_4"/>
<dbReference type="UniPathway" id="UPA00258">
    <property type="reaction ID" value="UER00370"/>
</dbReference>
<dbReference type="Proteomes" id="UP000002429">
    <property type="component" value="Chromosome"/>
</dbReference>
<dbReference type="GO" id="GO:0005737">
    <property type="term" value="C:cytoplasm"/>
    <property type="evidence" value="ECO:0007669"/>
    <property type="project" value="UniProtKB-SubCell"/>
</dbReference>
<dbReference type="GO" id="GO:0016151">
    <property type="term" value="F:nickel cation binding"/>
    <property type="evidence" value="ECO:0007669"/>
    <property type="project" value="InterPro"/>
</dbReference>
<dbReference type="GO" id="GO:0009039">
    <property type="term" value="F:urease activity"/>
    <property type="evidence" value="ECO:0007669"/>
    <property type="project" value="UniProtKB-UniRule"/>
</dbReference>
<dbReference type="GO" id="GO:0043419">
    <property type="term" value="P:urea catabolic process"/>
    <property type="evidence" value="ECO:0007669"/>
    <property type="project" value="UniProtKB-UniRule"/>
</dbReference>
<dbReference type="CDD" id="cd00390">
    <property type="entry name" value="Urease_gamma"/>
    <property type="match status" value="1"/>
</dbReference>
<dbReference type="Gene3D" id="3.30.280.10">
    <property type="entry name" value="Urease, gamma-like subunit"/>
    <property type="match status" value="1"/>
</dbReference>
<dbReference type="HAMAP" id="MF_00739">
    <property type="entry name" value="Urease_gamma"/>
    <property type="match status" value="1"/>
</dbReference>
<dbReference type="InterPro" id="IPR012010">
    <property type="entry name" value="Urease_gamma"/>
</dbReference>
<dbReference type="InterPro" id="IPR002026">
    <property type="entry name" value="Urease_gamma/gamma-beta_su"/>
</dbReference>
<dbReference type="InterPro" id="IPR036463">
    <property type="entry name" value="Urease_gamma_sf"/>
</dbReference>
<dbReference type="InterPro" id="IPR050069">
    <property type="entry name" value="Urease_subunit"/>
</dbReference>
<dbReference type="NCBIfam" id="NF009712">
    <property type="entry name" value="PRK13241.1"/>
    <property type="match status" value="1"/>
</dbReference>
<dbReference type="NCBIfam" id="TIGR00193">
    <property type="entry name" value="urease_gam"/>
    <property type="match status" value="1"/>
</dbReference>
<dbReference type="PANTHER" id="PTHR33569">
    <property type="entry name" value="UREASE"/>
    <property type="match status" value="1"/>
</dbReference>
<dbReference type="PANTHER" id="PTHR33569:SF1">
    <property type="entry name" value="UREASE"/>
    <property type="match status" value="1"/>
</dbReference>
<dbReference type="Pfam" id="PF00547">
    <property type="entry name" value="Urease_gamma"/>
    <property type="match status" value="1"/>
</dbReference>
<dbReference type="PIRSF" id="PIRSF001223">
    <property type="entry name" value="Urease_gamma"/>
    <property type="match status" value="1"/>
</dbReference>
<dbReference type="SUPFAM" id="SSF54111">
    <property type="entry name" value="Urease, gamma-subunit"/>
    <property type="match status" value="1"/>
</dbReference>
<gene>
    <name evidence="1" type="primary">ureA</name>
    <name type="ordered locus">Rmet_0958</name>
</gene>
<protein>
    <recommendedName>
        <fullName evidence="1">Urease subunit gamma</fullName>
        <ecNumber evidence="1">3.5.1.5</ecNumber>
    </recommendedName>
    <alternativeName>
        <fullName evidence="1">Urea amidohydrolase subunit gamma</fullName>
    </alternativeName>
</protein>